<name>MTGA_RHIJ3</name>
<proteinExistence type="inferred from homology"/>
<feature type="chain" id="PRO_0000257686" description="Biosynthetic peptidoglycan transglycosylase">
    <location>
        <begin position="1"/>
        <end position="245"/>
    </location>
</feature>
<feature type="transmembrane region" description="Helical" evidence="1">
    <location>
        <begin position="29"/>
        <end position="49"/>
    </location>
</feature>
<keyword id="KW-0997">Cell inner membrane</keyword>
<keyword id="KW-1003">Cell membrane</keyword>
<keyword id="KW-0133">Cell shape</keyword>
<keyword id="KW-0961">Cell wall biogenesis/degradation</keyword>
<keyword id="KW-0328">Glycosyltransferase</keyword>
<keyword id="KW-0472">Membrane</keyword>
<keyword id="KW-0573">Peptidoglycan synthesis</keyword>
<keyword id="KW-0808">Transferase</keyword>
<keyword id="KW-0812">Transmembrane</keyword>
<keyword id="KW-1133">Transmembrane helix</keyword>
<gene>
    <name evidence="1" type="primary">mtgA</name>
    <name type="ordered locus">RL4627</name>
</gene>
<comment type="function">
    <text evidence="1">Peptidoglycan polymerase that catalyzes glycan chain elongation from lipid-linked precursors.</text>
</comment>
<comment type="catalytic activity">
    <reaction evidence="1">
        <text>[GlcNAc-(1-&gt;4)-Mur2Ac(oyl-L-Ala-gamma-D-Glu-L-Lys-D-Ala-D-Ala)](n)-di-trans,octa-cis-undecaprenyl diphosphate + beta-D-GlcNAc-(1-&gt;4)-Mur2Ac(oyl-L-Ala-gamma-D-Glu-L-Lys-D-Ala-D-Ala)-di-trans,octa-cis-undecaprenyl diphosphate = [GlcNAc-(1-&gt;4)-Mur2Ac(oyl-L-Ala-gamma-D-Glu-L-Lys-D-Ala-D-Ala)](n+1)-di-trans,octa-cis-undecaprenyl diphosphate + di-trans,octa-cis-undecaprenyl diphosphate + H(+)</text>
        <dbReference type="Rhea" id="RHEA:23708"/>
        <dbReference type="Rhea" id="RHEA-COMP:9602"/>
        <dbReference type="Rhea" id="RHEA-COMP:9603"/>
        <dbReference type="ChEBI" id="CHEBI:15378"/>
        <dbReference type="ChEBI" id="CHEBI:58405"/>
        <dbReference type="ChEBI" id="CHEBI:60033"/>
        <dbReference type="ChEBI" id="CHEBI:78435"/>
        <dbReference type="EC" id="2.4.99.28"/>
    </reaction>
</comment>
<comment type="pathway">
    <text evidence="1">Cell wall biogenesis; peptidoglycan biosynthesis.</text>
</comment>
<comment type="subcellular location">
    <subcellularLocation>
        <location evidence="1">Cell inner membrane</location>
        <topology evidence="1">Single-pass membrane protein</topology>
    </subcellularLocation>
</comment>
<comment type="similarity">
    <text evidence="1">Belongs to the glycosyltransferase 51 family.</text>
</comment>
<reference key="1">
    <citation type="journal article" date="2006" name="Genome Biol.">
        <title>The genome of Rhizobium leguminosarum has recognizable core and accessory components.</title>
        <authorList>
            <person name="Young J.P.W."/>
            <person name="Crossman L.C."/>
            <person name="Johnston A.W.B."/>
            <person name="Thomson N.R."/>
            <person name="Ghazoui Z.F."/>
            <person name="Hull K.H."/>
            <person name="Wexler M."/>
            <person name="Curson A.R.J."/>
            <person name="Todd J.D."/>
            <person name="Poole P.S."/>
            <person name="Mauchline T.H."/>
            <person name="East A.K."/>
            <person name="Quail M.A."/>
            <person name="Churcher C."/>
            <person name="Arrowsmith C."/>
            <person name="Cherevach I."/>
            <person name="Chillingworth T."/>
            <person name="Clarke K."/>
            <person name="Cronin A."/>
            <person name="Davis P."/>
            <person name="Fraser A."/>
            <person name="Hance Z."/>
            <person name="Hauser H."/>
            <person name="Jagels K."/>
            <person name="Moule S."/>
            <person name="Mungall K."/>
            <person name="Norbertczak H."/>
            <person name="Rabbinowitsch E."/>
            <person name="Sanders M."/>
            <person name="Simmonds M."/>
            <person name="Whitehead S."/>
            <person name="Parkhill J."/>
        </authorList>
    </citation>
    <scope>NUCLEOTIDE SEQUENCE [LARGE SCALE GENOMIC DNA]</scope>
    <source>
        <strain>DSM 114642 / LMG 32736 / 3841</strain>
    </source>
</reference>
<organism>
    <name type="scientific">Rhizobium johnstonii (strain DSM 114642 / LMG 32736 / 3841)</name>
    <name type="common">Rhizobium leguminosarum bv. viciae</name>
    <dbReference type="NCBI Taxonomy" id="216596"/>
    <lineage>
        <taxon>Bacteria</taxon>
        <taxon>Pseudomonadati</taxon>
        <taxon>Pseudomonadota</taxon>
        <taxon>Alphaproteobacteria</taxon>
        <taxon>Hyphomicrobiales</taxon>
        <taxon>Rhizobiaceae</taxon>
        <taxon>Rhizobium/Agrobacterium group</taxon>
        <taxon>Rhizobium</taxon>
        <taxon>Rhizobium johnstonii</taxon>
    </lineage>
</organism>
<accession>Q1MAC8</accession>
<evidence type="ECO:0000255" key="1">
    <source>
        <dbReference type="HAMAP-Rule" id="MF_00766"/>
    </source>
</evidence>
<sequence length="245" mass="27834">MDIAPEREDSVDMPARRRWFEDRRVLKRIVLAVLIVLILPYALIVFYLLPFIHPVSTLMLRDLVLLRGYDRQWVSLDNIAPVVVQSVMMSEDGQYCFHGGVDWAEMRMLVEDTLKGQATRGGSTIPMQTAKNLFLWNGRSFVRKALELPLAVTTDFVLSKRRLMEIYLNIAEWGPGIYGIEAAARHHFKVPASKLTRRQASLLAVSLPNPIDRNAGKPGRGLRRLAGVIERRAQGSGDYIKCIYD</sequence>
<dbReference type="EC" id="2.4.99.28" evidence="1"/>
<dbReference type="EMBL" id="AM236080">
    <property type="protein sequence ID" value="CAK10110.1"/>
    <property type="molecule type" value="Genomic_DNA"/>
</dbReference>
<dbReference type="SMR" id="Q1MAC8"/>
<dbReference type="CAZy" id="GT51">
    <property type="family name" value="Glycosyltransferase Family 51"/>
</dbReference>
<dbReference type="EnsemblBacteria" id="CAK10110">
    <property type="protein sequence ID" value="CAK10110"/>
    <property type="gene ID" value="RL4627"/>
</dbReference>
<dbReference type="KEGG" id="rle:RL4627"/>
<dbReference type="eggNOG" id="COG0744">
    <property type="taxonomic scope" value="Bacteria"/>
</dbReference>
<dbReference type="HOGENOM" id="CLU_006354_1_1_5"/>
<dbReference type="UniPathway" id="UPA00219"/>
<dbReference type="Proteomes" id="UP000006575">
    <property type="component" value="Chromosome"/>
</dbReference>
<dbReference type="GO" id="GO:0009274">
    <property type="term" value="C:peptidoglycan-based cell wall"/>
    <property type="evidence" value="ECO:0007669"/>
    <property type="project" value="InterPro"/>
</dbReference>
<dbReference type="GO" id="GO:0005886">
    <property type="term" value="C:plasma membrane"/>
    <property type="evidence" value="ECO:0007669"/>
    <property type="project" value="UniProtKB-SubCell"/>
</dbReference>
<dbReference type="GO" id="GO:0016763">
    <property type="term" value="F:pentosyltransferase activity"/>
    <property type="evidence" value="ECO:0007669"/>
    <property type="project" value="InterPro"/>
</dbReference>
<dbReference type="GO" id="GO:0008955">
    <property type="term" value="F:peptidoglycan glycosyltransferase activity"/>
    <property type="evidence" value="ECO:0007669"/>
    <property type="project" value="UniProtKB-UniRule"/>
</dbReference>
<dbReference type="GO" id="GO:0071555">
    <property type="term" value="P:cell wall organization"/>
    <property type="evidence" value="ECO:0007669"/>
    <property type="project" value="UniProtKB-KW"/>
</dbReference>
<dbReference type="GO" id="GO:0009252">
    <property type="term" value="P:peptidoglycan biosynthetic process"/>
    <property type="evidence" value="ECO:0007669"/>
    <property type="project" value="UniProtKB-UniRule"/>
</dbReference>
<dbReference type="GO" id="GO:0008360">
    <property type="term" value="P:regulation of cell shape"/>
    <property type="evidence" value="ECO:0007669"/>
    <property type="project" value="UniProtKB-KW"/>
</dbReference>
<dbReference type="Gene3D" id="1.10.3810.10">
    <property type="entry name" value="Biosynthetic peptidoglycan transglycosylase-like"/>
    <property type="match status" value="1"/>
</dbReference>
<dbReference type="HAMAP" id="MF_00766">
    <property type="entry name" value="PGT_MtgA"/>
    <property type="match status" value="1"/>
</dbReference>
<dbReference type="InterPro" id="IPR001264">
    <property type="entry name" value="Glyco_trans_51"/>
</dbReference>
<dbReference type="InterPro" id="IPR023346">
    <property type="entry name" value="Lysozyme-like_dom_sf"/>
</dbReference>
<dbReference type="InterPro" id="IPR036950">
    <property type="entry name" value="PBP_transglycosylase"/>
</dbReference>
<dbReference type="InterPro" id="IPR011812">
    <property type="entry name" value="Pep_trsgly"/>
</dbReference>
<dbReference type="NCBIfam" id="TIGR02070">
    <property type="entry name" value="mono_pep_trsgly"/>
    <property type="match status" value="1"/>
</dbReference>
<dbReference type="PANTHER" id="PTHR30400:SF0">
    <property type="entry name" value="BIOSYNTHETIC PEPTIDOGLYCAN TRANSGLYCOSYLASE"/>
    <property type="match status" value="1"/>
</dbReference>
<dbReference type="PANTHER" id="PTHR30400">
    <property type="entry name" value="MONOFUNCTIONAL BIOSYNTHETIC PEPTIDOGLYCAN TRANSGLYCOSYLASE"/>
    <property type="match status" value="1"/>
</dbReference>
<dbReference type="Pfam" id="PF00912">
    <property type="entry name" value="Transgly"/>
    <property type="match status" value="1"/>
</dbReference>
<dbReference type="SUPFAM" id="SSF53955">
    <property type="entry name" value="Lysozyme-like"/>
    <property type="match status" value="1"/>
</dbReference>
<protein>
    <recommendedName>
        <fullName evidence="1">Biosynthetic peptidoglycan transglycosylase</fullName>
        <ecNumber evidence="1">2.4.99.28</ecNumber>
    </recommendedName>
    <alternativeName>
        <fullName evidence="1">Glycan polymerase</fullName>
    </alternativeName>
    <alternativeName>
        <fullName evidence="1">Peptidoglycan glycosyltransferase MtgA</fullName>
        <shortName evidence="1">PGT</shortName>
    </alternativeName>
</protein>